<sequence length="521" mass="55842">MHSLDEPLDLKLSITKLRAAREKRERTLGVVRHHALHRELGLVDDSPAPGSPGSPPPGFLLNPKFPEKVDGRFSAAPLVDLSLSPPSGLDSPNGSSSLSPECQGNGDLPPLPTAVDFQPLRYLDGVPSSFQFFLPLGSGGALHLPASSFLPPPKDKCLSPELPLAKQLVCRWAKCNQLFELLQDLVDHVNDHHVKPEQDARYCCHWEGCARHGRGFNARYKMLIHIRTHTNEKPHRCPTCNKSFSRLENLKIHNRSHTGEKPYVCPYEGCNKRYSNSSDRFKHTRTHYVDKPYYCKMPGCHKRYTDPSSLRKHIKAHGHFVSHEQQELLQLRPPPKPPLPTPDSGSYVSGAQIIIPNPAALFGGPSLPGLPLPLPPGPLDLSALACGNGGGGGGGIGPGLPGSVLPLNLAKNPLLPSPFGAGGLGLPVVSLLGGSAGSKAEGEKGRGSVPARVLGLEDHKTPLERTERSRSRPSPDGLPLLPGTVLDLSTGNSAASSPEVLTPGWVVIPPGSVLLKPAVVN</sequence>
<keyword id="KW-0010">Activator</keyword>
<keyword id="KW-0963">Cytoplasm</keyword>
<keyword id="KW-0217">Developmental protein</keyword>
<keyword id="KW-0221">Differentiation</keyword>
<keyword id="KW-0238">DNA-binding</keyword>
<keyword id="KW-0479">Metal-binding</keyword>
<keyword id="KW-0524">Neurogenesis</keyword>
<keyword id="KW-0539">Nucleus</keyword>
<keyword id="KW-1185">Reference proteome</keyword>
<keyword id="KW-0677">Repeat</keyword>
<keyword id="KW-0678">Repressor</keyword>
<keyword id="KW-0804">Transcription</keyword>
<keyword id="KW-0805">Transcription regulation</keyword>
<keyword id="KW-0862">Zinc</keyword>
<keyword id="KW-0863">Zinc-finger</keyword>
<feature type="chain" id="PRO_0000286984" description="Zinc finger protein GLIS2">
    <location>
        <begin position="1"/>
        <end position="521"/>
    </location>
</feature>
<feature type="zinc finger region" description="C2H2-type 1" evidence="1">
    <location>
        <begin position="168"/>
        <end position="193"/>
    </location>
</feature>
<feature type="zinc finger region" description="C2H2-type 2; atypical" evidence="1">
    <location>
        <begin position="202"/>
        <end position="229"/>
    </location>
</feature>
<feature type="zinc finger region" description="C2H2-type 3" evidence="1">
    <location>
        <begin position="235"/>
        <end position="257"/>
    </location>
</feature>
<feature type="zinc finger region" description="C2H2-type 4" evidence="1">
    <location>
        <begin position="263"/>
        <end position="287"/>
    </location>
</feature>
<feature type="zinc finger region" description="C2H2-type 5" evidence="1">
    <location>
        <begin position="293"/>
        <end position="317"/>
    </location>
</feature>
<feature type="region of interest" description="Interaction with CTNND1" evidence="7">
    <location>
        <begin position="35"/>
        <end position="174"/>
    </location>
</feature>
<feature type="region of interest" description="Disordered" evidence="2">
    <location>
        <begin position="41"/>
        <end position="63"/>
    </location>
</feature>
<feature type="region of interest" description="Transcription activation">
    <location>
        <begin position="71"/>
        <end position="137"/>
    </location>
</feature>
<feature type="region of interest" description="Disordered" evidence="2">
    <location>
        <begin position="84"/>
        <end position="110"/>
    </location>
</feature>
<feature type="region of interest" description="Transcription repression">
    <location>
        <begin position="148"/>
        <end position="171"/>
    </location>
</feature>
<feature type="region of interest" description="Disordered" evidence="2">
    <location>
        <begin position="436"/>
        <end position="501"/>
    </location>
</feature>
<feature type="compositionally biased region" description="Pro residues" evidence="2">
    <location>
        <begin position="49"/>
        <end position="58"/>
    </location>
</feature>
<feature type="compositionally biased region" description="Low complexity" evidence="2">
    <location>
        <begin position="84"/>
        <end position="100"/>
    </location>
</feature>
<feature type="compositionally biased region" description="Basic and acidic residues" evidence="2">
    <location>
        <begin position="455"/>
        <end position="470"/>
    </location>
</feature>
<feature type="compositionally biased region" description="Polar residues" evidence="2">
    <location>
        <begin position="487"/>
        <end position="496"/>
    </location>
</feature>
<feature type="site" description="Cleavage">
    <location>
        <begin position="287"/>
        <end position="288"/>
    </location>
</feature>
<feature type="mutagenesis site" description="Impairs DNA-binding." evidence="7">
    <original>C</original>
    <variation>A</variation>
    <location>
        <position position="170"/>
    </location>
</feature>
<feature type="mutagenesis site" description="Abolishes interaction with CTNNB1. No effect on nuclear localization." evidence="6">
    <original>C</original>
    <variation>A</variation>
    <location>
        <position position="175"/>
    </location>
</feature>
<feature type="mutagenesis site" description="No effect on C-terminus cleavage." evidence="7">
    <original>Y</original>
    <variation>A</variation>
    <location>
        <position position="288"/>
    </location>
</feature>
<feature type="mutagenesis site" description="Impairs C-terminus cleavage." evidence="7">
    <original>D</original>
    <variation>A</variation>
    <location>
        <position position="290"/>
    </location>
</feature>
<feature type="sequence conflict" description="In Ref. 2; AAL93213." evidence="9" ref="2">
    <original>SG</original>
    <variation>CE</variation>
    <location>
        <begin position="87"/>
        <end position="88"/>
    </location>
</feature>
<feature type="sequence conflict" description="In Ref. 2; AAK00953." evidence="9" ref="2">
    <original>G</original>
    <variation>D</variation>
    <location>
        <position position="208"/>
    </location>
</feature>
<feature type="sequence conflict" description="In Ref. 1; AAK28410." evidence="9" ref="1">
    <location>
        <position position="210"/>
    </location>
</feature>
<feature type="sequence conflict" description="In Ref. 2; AAL93213." evidence="9" ref="2">
    <original>N</original>
    <variation>K</variation>
    <location>
        <position position="249"/>
    </location>
</feature>
<feature type="sequence conflict" description="In Ref. 2; AAL93213." evidence="9" ref="2">
    <original>KAHG</original>
    <variation>RPW</variation>
    <location>
        <begin position="315"/>
        <end position="318"/>
    </location>
</feature>
<feature type="sequence conflict" description="In Ref. 1; AAK28410." evidence="9" ref="1">
    <original>G</original>
    <variation>A</variation>
    <location>
        <position position="387"/>
    </location>
</feature>
<feature type="sequence conflict" description="In Ref. 2; AAL93213/AAK00953." evidence="9" ref="2">
    <original>D</original>
    <variation>N</variation>
    <location>
        <position position="458"/>
    </location>
</feature>
<gene>
    <name type="primary">Glis2</name>
    <name type="synonym">Gli5</name>
    <name type="synonym">Nkl</name>
</gene>
<organism>
    <name type="scientific">Mus musculus</name>
    <name type="common">Mouse</name>
    <dbReference type="NCBI Taxonomy" id="10090"/>
    <lineage>
        <taxon>Eukaryota</taxon>
        <taxon>Metazoa</taxon>
        <taxon>Chordata</taxon>
        <taxon>Craniata</taxon>
        <taxon>Vertebrata</taxon>
        <taxon>Euteleostomi</taxon>
        <taxon>Mammalia</taxon>
        <taxon>Eutheria</taxon>
        <taxon>Euarchontoglires</taxon>
        <taxon>Glires</taxon>
        <taxon>Rodentia</taxon>
        <taxon>Myomorpha</taxon>
        <taxon>Muroidea</taxon>
        <taxon>Muridae</taxon>
        <taxon>Murinae</taxon>
        <taxon>Mus</taxon>
        <taxon>Mus</taxon>
    </lineage>
</organism>
<name>GLIS2_MOUSE</name>
<proteinExistence type="evidence at protein level"/>
<reference key="1">
    <citation type="journal article" date="2001" name="Development">
        <title>Identification of NKL, a novel Gli-Kruppel zinc-finger protein that promotes neuronal differentiation.</title>
        <authorList>
            <person name="Lamar E."/>
            <person name="Kintner C."/>
            <person name="Goulding M."/>
        </authorList>
    </citation>
    <scope>NUCLEOTIDE SEQUENCE [MRNA]</scope>
    <scope>DEVELOPMENTAL STAGE</scope>
    <scope>FUNCTION</scope>
</reference>
<reference key="2">
    <citation type="journal article" date="2002" name="J. Biol. Chem.">
        <title>Characterization of Glis2, a novel gene encoding a Gli-related, Kruppel-like transcription factor with transactivation and repressor functions. Roles in kidney development and neurogenesis.</title>
        <authorList>
            <person name="Zhang F."/>
            <person name="Nakanishi G."/>
            <person name="Kurebayashi S."/>
            <person name="Yoshino K."/>
            <person name="Perantoni A."/>
            <person name="Kim Y.-S."/>
            <person name="Jetten A.M."/>
        </authorList>
    </citation>
    <scope>NUCLEOTIDE SEQUENCE [GENOMIC DNA / MRNA]</scope>
    <scope>SUBCELLULAR LOCATION</scope>
    <scope>TISSUE SPECIFICITY</scope>
    <scope>FUNCTION</scope>
    <source>
        <strain>129/SvJ</strain>
        <strain>BALB/cJ</strain>
        <tissue>Kidney</tissue>
    </source>
</reference>
<reference key="3">
    <citation type="journal article" date="2004" name="Genome Res.">
        <title>The status, quality, and expansion of the NIH full-length cDNA project: the Mammalian Gene Collection (MGC).</title>
        <authorList>
            <consortium name="The MGC Project Team"/>
        </authorList>
    </citation>
    <scope>NUCLEOTIDE SEQUENCE [LARGE SCALE MRNA]</scope>
    <source>
        <strain>FVB/N</strain>
        <tissue>Mammary tumor</tissue>
    </source>
</reference>
<reference key="4">
    <citation type="journal article" date="2005" name="Nucleic Acids Res.">
        <title>Kruppel-like zinc finger protein Gli-similar 2 (Glis2) represses transcription through interaction with C-terminal binding protein 1 (CtBP1).</title>
        <authorList>
            <person name="Kim S.-C."/>
            <person name="Kim Y.-S."/>
            <person name="Jetten A.M."/>
        </authorList>
    </citation>
    <scope>FUNCTION</scope>
    <scope>INTERACTION WITH CTBP1 AND HDAC3</scope>
    <scope>CLEAVAGE</scope>
    <scope>SUBCELLULAR LOCATION</scope>
</reference>
<reference key="5">
    <citation type="journal article" date="2007" name="FEBS Lett.">
        <title>The Kruppel-like zinc finger protein Glis2 functions as a negative modulator of the Wnt/beta-catenin signaling pathway.</title>
        <authorList>
            <person name="Kim Y.-S."/>
            <person name="Kang H.S."/>
            <person name="Jetten A.M."/>
        </authorList>
    </citation>
    <scope>FUNCTION</scope>
    <scope>INTERACTION WITH CTNNB1</scope>
    <scope>MUTAGENESIS OF CYS-175</scope>
    <scope>SUBCELLULAR LOCATION</scope>
</reference>
<reference key="6">
    <citation type="journal article" date="2007" name="Mol. Biol. Cell">
        <title>The transcriptional repressor Glis2 is a novel binding partner for p120 catenin.</title>
        <authorList>
            <person name="Hosking C.R."/>
            <person name="Ulloa F."/>
            <person name="Hogan C."/>
            <person name="Ferber E.C."/>
            <person name="Figueroa A."/>
            <person name="Gevaert K."/>
            <person name="Birchmeier W."/>
            <person name="Briscoe J."/>
            <person name="Fujita Y."/>
        </authorList>
    </citation>
    <scope>FUNCTION</scope>
    <scope>INTERACTION WITH CTNND1</scope>
    <scope>CLEAVAGE SITE</scope>
    <scope>DNA-BINDING</scope>
    <scope>SUBCELLULAR LOCATION</scope>
    <scope>MUTAGENESIS OF CYS-170; TYR-288 AND ASP-290</scope>
</reference>
<reference key="7">
    <citation type="journal article" date="2011" name="Hum. Mol. Genet.">
        <title>Increased hedgehog signaling in postnatal kidney results in aberrant activation of nephron developmental programs.</title>
        <authorList>
            <person name="Li B."/>
            <person name="Rauhauser A.A."/>
            <person name="Dai J."/>
            <person name="Sakthivel R."/>
            <person name="Igarashi P."/>
            <person name="Jetten A.M."/>
            <person name="Attanasio M."/>
        </authorList>
    </citation>
    <scope>FUNCTION</scope>
    <scope>INTERACTION WITH SUFU</scope>
</reference>
<comment type="function">
    <text evidence="3 4 5 6 7 8">Can act either as a transcriptional repressor or as a transcriptional activator, depending on the cell context. Acts as a repressor of the Hedgehog signaling pathway. Represses the Hedgehog-dependent expression of Wnt4. Necessary to maintain the differentiated epithelial phenotype in renal cells through the inhibition of SNAI1, which itself induces the epithelial-to-mesenchymal transition. Represses transcriptional activation by CTNNB1 in the Wnt signaling pathway. May act by recruiting the corepressors CTBP1 and HDAC3. May be involved in neuron differentiation.</text>
</comment>
<comment type="subunit">
    <text evidence="5 6 7 8">Interacts with CTBP1 and HDAC3. Interacts with CTNNB1 and CTNND1. Interacts with SUFU.</text>
</comment>
<comment type="subcellular location">
    <subcellularLocation>
        <location>Nucleus speckle</location>
    </subcellularLocation>
    <subcellularLocation>
        <location>Cytoplasm</location>
    </subcellularLocation>
</comment>
<comment type="tissue specificity">
    <text evidence="4">Expressed at high levels in kidney, and at lower levels in heart and lung.</text>
</comment>
<comment type="developmental stage">
    <text evidence="3">Expression begins at 9.5 dpc in cranial ganglia, dorsal root ganglia and neural tube. At 10.5 dpc, broadly expressed in the intermediate zone of the hindbrain, spinal cord and dorsal root ganglia. By 12.5 dpc, expression in the spinal cord becomes restricted to a narrow band of cells in the ventricular zone.</text>
</comment>
<comment type="domain">
    <text>The C2H2-type zinc finger 1 has a major repressor function and is required for CTNNB1 binding.</text>
</comment>
<comment type="PTM">
    <text evidence="5 7">C-terminus cleavage is induced by interaction with CTNND1 and enhances by Src tyrosine kinase.</text>
</comment>
<comment type="similarity">
    <text evidence="9">Belongs to the GLI C2H2-type zinc-finger protein family.</text>
</comment>
<protein>
    <recommendedName>
        <fullName>Zinc finger protein GLIS2</fullName>
    </recommendedName>
    <alternativeName>
        <fullName>GLI-similar 2</fullName>
    </alternativeName>
    <alternativeName>
        <fullName>Neuronal Krueppel-like protein</fullName>
    </alternativeName>
    <alternativeName>
        <fullName>Zinc finger protein GLI5</fullName>
    </alternativeName>
</protein>
<dbReference type="EMBL" id="AF249340">
    <property type="protein sequence ID" value="AAK28410.1"/>
    <property type="molecule type" value="mRNA"/>
</dbReference>
<dbReference type="EMBL" id="AF325913">
    <property type="protein sequence ID" value="AAK00953.1"/>
    <property type="molecule type" value="mRNA"/>
</dbReference>
<dbReference type="EMBL" id="AF336135">
    <property type="protein sequence ID" value="AAL93213.1"/>
    <property type="molecule type" value="Genomic_DNA"/>
</dbReference>
<dbReference type="EMBL" id="BC021517">
    <property type="protein sequence ID" value="AAH21517.1"/>
    <property type="molecule type" value="mRNA"/>
</dbReference>
<dbReference type="CCDS" id="CCDS27920.1"/>
<dbReference type="RefSeq" id="NP_112461.2">
    <property type="nucleotide sequence ID" value="NM_031184.3"/>
</dbReference>
<dbReference type="RefSeq" id="XP_006522831.1">
    <property type="nucleotide sequence ID" value="XM_006522768.5"/>
</dbReference>
<dbReference type="SMR" id="Q8VDL9"/>
<dbReference type="BioGRID" id="219913">
    <property type="interactions" value="2"/>
</dbReference>
<dbReference type="CORUM" id="Q8VDL9"/>
<dbReference type="FunCoup" id="Q8VDL9">
    <property type="interactions" value="990"/>
</dbReference>
<dbReference type="STRING" id="10090.ENSMUSP00000014447"/>
<dbReference type="GlyGen" id="Q8VDL9">
    <property type="glycosylation" value="1 site"/>
</dbReference>
<dbReference type="iPTMnet" id="Q8VDL9"/>
<dbReference type="PhosphoSitePlus" id="Q8VDL9"/>
<dbReference type="PaxDb" id="10090-ENSMUSP00000014447"/>
<dbReference type="ProteomicsDB" id="267453"/>
<dbReference type="Antibodypedia" id="11033">
    <property type="antibodies" value="116 antibodies from 23 providers"/>
</dbReference>
<dbReference type="DNASU" id="83396"/>
<dbReference type="Ensembl" id="ENSMUST00000014447.13">
    <property type="protein sequence ID" value="ENSMUSP00000014447.7"/>
    <property type="gene ID" value="ENSMUSG00000014303.14"/>
</dbReference>
<dbReference type="GeneID" id="83396"/>
<dbReference type="KEGG" id="mmu:83396"/>
<dbReference type="UCSC" id="uc007xzw.1">
    <property type="organism name" value="mouse"/>
</dbReference>
<dbReference type="AGR" id="MGI:1932535"/>
<dbReference type="CTD" id="84662"/>
<dbReference type="MGI" id="MGI:1932535">
    <property type="gene designation" value="Glis2"/>
</dbReference>
<dbReference type="VEuPathDB" id="HostDB:ENSMUSG00000014303"/>
<dbReference type="eggNOG" id="KOG1721">
    <property type="taxonomic scope" value="Eukaryota"/>
</dbReference>
<dbReference type="GeneTree" id="ENSGT00940000158383"/>
<dbReference type="HOGENOM" id="CLU_031801_1_0_1"/>
<dbReference type="InParanoid" id="Q8VDL9"/>
<dbReference type="OMA" id="EAGYCCH"/>
<dbReference type="OrthoDB" id="3214149at2759"/>
<dbReference type="PhylomeDB" id="Q8VDL9"/>
<dbReference type="TreeFam" id="TF351425"/>
<dbReference type="BioGRID-ORCS" id="83396">
    <property type="hits" value="2 hits in 78 CRISPR screens"/>
</dbReference>
<dbReference type="ChiTaRS" id="Glis1">
    <property type="organism name" value="mouse"/>
</dbReference>
<dbReference type="PRO" id="PR:Q8VDL9"/>
<dbReference type="Proteomes" id="UP000000589">
    <property type="component" value="Chromosome 16"/>
</dbReference>
<dbReference type="RNAct" id="Q8VDL9">
    <property type="molecule type" value="protein"/>
</dbReference>
<dbReference type="Bgee" id="ENSMUSG00000014303">
    <property type="expression patterns" value="Expressed in ciliary body and 207 other cell types or tissues"/>
</dbReference>
<dbReference type="ExpressionAtlas" id="Q8VDL9">
    <property type="expression patterns" value="baseline and differential"/>
</dbReference>
<dbReference type="GO" id="GO:0005737">
    <property type="term" value="C:cytoplasm"/>
    <property type="evidence" value="ECO:0000314"/>
    <property type="project" value="MGI"/>
</dbReference>
<dbReference type="GO" id="GO:0097730">
    <property type="term" value="C:non-motile cilium"/>
    <property type="evidence" value="ECO:0000314"/>
    <property type="project" value="MGI"/>
</dbReference>
<dbReference type="GO" id="GO:0016607">
    <property type="term" value="C:nuclear speck"/>
    <property type="evidence" value="ECO:0000314"/>
    <property type="project" value="UniProtKB"/>
</dbReference>
<dbReference type="GO" id="GO:0005634">
    <property type="term" value="C:nucleus"/>
    <property type="evidence" value="ECO:0000314"/>
    <property type="project" value="BHF-UCL"/>
</dbReference>
<dbReference type="GO" id="GO:0005667">
    <property type="term" value="C:transcription regulator complex"/>
    <property type="evidence" value="ECO:0000250"/>
    <property type="project" value="MGI"/>
</dbReference>
<dbReference type="GO" id="GO:0003677">
    <property type="term" value="F:DNA binding"/>
    <property type="evidence" value="ECO:0000314"/>
    <property type="project" value="MGI"/>
</dbReference>
<dbReference type="GO" id="GO:0001228">
    <property type="term" value="F:DNA-binding transcription activator activity, RNA polymerase II-specific"/>
    <property type="evidence" value="ECO:0000314"/>
    <property type="project" value="BHF-UCL"/>
</dbReference>
<dbReference type="GO" id="GO:0003700">
    <property type="term" value="F:DNA-binding transcription factor activity"/>
    <property type="evidence" value="ECO:0000250"/>
    <property type="project" value="MGI"/>
</dbReference>
<dbReference type="GO" id="GO:0001227">
    <property type="term" value="F:DNA-binding transcription repressor activity, RNA polymerase II-specific"/>
    <property type="evidence" value="ECO:0000314"/>
    <property type="project" value="BHF-UCL"/>
</dbReference>
<dbReference type="GO" id="GO:0000977">
    <property type="term" value="F:RNA polymerase II transcription regulatory region sequence-specific DNA binding"/>
    <property type="evidence" value="ECO:0000314"/>
    <property type="project" value="MGI"/>
</dbReference>
<dbReference type="GO" id="GO:0000976">
    <property type="term" value="F:transcription cis-regulatory region binding"/>
    <property type="evidence" value="ECO:0000314"/>
    <property type="project" value="BHF-UCL"/>
</dbReference>
<dbReference type="GO" id="GO:0008270">
    <property type="term" value="F:zinc ion binding"/>
    <property type="evidence" value="ECO:0007669"/>
    <property type="project" value="UniProtKB-KW"/>
</dbReference>
<dbReference type="GO" id="GO:0061005">
    <property type="term" value="P:cell differentiation involved in kidney development"/>
    <property type="evidence" value="ECO:0000315"/>
    <property type="project" value="MGI"/>
</dbReference>
<dbReference type="GO" id="GO:0061484">
    <property type="term" value="P:hematopoietic stem cell homeostasis"/>
    <property type="evidence" value="ECO:0000315"/>
    <property type="project" value="MGI"/>
</dbReference>
<dbReference type="GO" id="GO:0001822">
    <property type="term" value="P:kidney development"/>
    <property type="evidence" value="ECO:0000315"/>
    <property type="project" value="MGI"/>
</dbReference>
<dbReference type="GO" id="GO:0045892">
    <property type="term" value="P:negative regulation of DNA-templated transcription"/>
    <property type="evidence" value="ECO:0000314"/>
    <property type="project" value="UniProtKB"/>
</dbReference>
<dbReference type="GO" id="GO:0045879">
    <property type="term" value="P:negative regulation of smoothened signaling pathway"/>
    <property type="evidence" value="ECO:0000315"/>
    <property type="project" value="UniProtKB"/>
</dbReference>
<dbReference type="GO" id="GO:0000122">
    <property type="term" value="P:negative regulation of transcription by RNA polymerase II"/>
    <property type="evidence" value="ECO:0000314"/>
    <property type="project" value="BHF-UCL"/>
</dbReference>
<dbReference type="GO" id="GO:0007399">
    <property type="term" value="P:nervous system development"/>
    <property type="evidence" value="ECO:0007669"/>
    <property type="project" value="UniProtKB-KW"/>
</dbReference>
<dbReference type="GO" id="GO:0045893">
    <property type="term" value="P:positive regulation of DNA-templated transcription"/>
    <property type="evidence" value="ECO:0000314"/>
    <property type="project" value="UniProtKB"/>
</dbReference>
<dbReference type="GO" id="GO:1900182">
    <property type="term" value="P:positive regulation of protein localization to nucleus"/>
    <property type="evidence" value="ECO:0000316"/>
    <property type="project" value="MGI"/>
</dbReference>
<dbReference type="GO" id="GO:0045944">
    <property type="term" value="P:positive regulation of transcription by RNA polymerase II"/>
    <property type="evidence" value="ECO:0000314"/>
    <property type="project" value="BHF-UCL"/>
</dbReference>
<dbReference type="GO" id="GO:0006357">
    <property type="term" value="P:regulation of transcription by RNA polymerase II"/>
    <property type="evidence" value="ECO:0000315"/>
    <property type="project" value="MGI"/>
</dbReference>
<dbReference type="FunFam" id="3.30.160.60:FF:000019">
    <property type="entry name" value="GLI family zinc finger 3"/>
    <property type="match status" value="1"/>
</dbReference>
<dbReference type="FunFam" id="3.30.160.60:FF:000310">
    <property type="entry name" value="GLIS family zinc finger 2"/>
    <property type="match status" value="1"/>
</dbReference>
<dbReference type="FunFam" id="3.30.160.60:FF:000357">
    <property type="entry name" value="GLIS family zinc finger 2"/>
    <property type="match status" value="1"/>
</dbReference>
<dbReference type="FunFam" id="3.30.160.60:FF:000359">
    <property type="entry name" value="GLIS family zinc finger 2"/>
    <property type="match status" value="1"/>
</dbReference>
<dbReference type="FunFam" id="3.30.160.60:FF:000532">
    <property type="entry name" value="GLIS family zinc finger 2"/>
    <property type="match status" value="1"/>
</dbReference>
<dbReference type="Gene3D" id="3.30.160.60">
    <property type="entry name" value="Classic Zinc Finger"/>
    <property type="match status" value="5"/>
</dbReference>
<dbReference type="InterPro" id="IPR043359">
    <property type="entry name" value="GLI-like"/>
</dbReference>
<dbReference type="InterPro" id="IPR056436">
    <property type="entry name" value="Znf-C2H2_ZIC1-5/GLI1-3-like"/>
</dbReference>
<dbReference type="InterPro" id="IPR036236">
    <property type="entry name" value="Znf_C2H2_sf"/>
</dbReference>
<dbReference type="InterPro" id="IPR013087">
    <property type="entry name" value="Znf_C2H2_type"/>
</dbReference>
<dbReference type="PANTHER" id="PTHR45718:SF8">
    <property type="entry name" value="GLIS FAMILY ZINC FINGER 2"/>
    <property type="match status" value="1"/>
</dbReference>
<dbReference type="PANTHER" id="PTHR45718">
    <property type="entry name" value="TRANSCRIPTIONAL ACTIVATOR CUBITUS INTERRUPTUS"/>
    <property type="match status" value="1"/>
</dbReference>
<dbReference type="Pfam" id="PF00096">
    <property type="entry name" value="zf-C2H2"/>
    <property type="match status" value="3"/>
</dbReference>
<dbReference type="Pfam" id="PF23561">
    <property type="entry name" value="zf-C2H2_15"/>
    <property type="match status" value="1"/>
</dbReference>
<dbReference type="SMART" id="SM00355">
    <property type="entry name" value="ZnF_C2H2"/>
    <property type="match status" value="5"/>
</dbReference>
<dbReference type="SUPFAM" id="SSF57667">
    <property type="entry name" value="beta-beta-alpha zinc fingers"/>
    <property type="match status" value="3"/>
</dbReference>
<dbReference type="PROSITE" id="PS00028">
    <property type="entry name" value="ZINC_FINGER_C2H2_1"/>
    <property type="match status" value="4"/>
</dbReference>
<dbReference type="PROSITE" id="PS50157">
    <property type="entry name" value="ZINC_FINGER_C2H2_2"/>
    <property type="match status" value="4"/>
</dbReference>
<accession>Q8VDL9</accession>
<accession>Q8R4X9</accession>
<accession>Q99MY6</accession>
<accession>Q99P73</accession>
<evidence type="ECO:0000255" key="1">
    <source>
        <dbReference type="PROSITE-ProRule" id="PRU00042"/>
    </source>
</evidence>
<evidence type="ECO:0000256" key="2">
    <source>
        <dbReference type="SAM" id="MobiDB-lite"/>
    </source>
</evidence>
<evidence type="ECO:0000269" key="3">
    <source>
    </source>
</evidence>
<evidence type="ECO:0000269" key="4">
    <source>
    </source>
</evidence>
<evidence type="ECO:0000269" key="5">
    <source>
    </source>
</evidence>
<evidence type="ECO:0000269" key="6">
    <source>
    </source>
</evidence>
<evidence type="ECO:0000269" key="7">
    <source>
    </source>
</evidence>
<evidence type="ECO:0000269" key="8">
    <source>
    </source>
</evidence>
<evidence type="ECO:0000305" key="9"/>